<protein>
    <recommendedName>
        <fullName>E3 ubiquitin-protein ligase SMURF2</fullName>
        <ecNumber evidence="1">2.3.2.26</ecNumber>
    </recommendedName>
    <alternativeName>
        <fullName>HECT-type E3 ubiquitin transferase SMURF2</fullName>
    </alternativeName>
    <alternativeName>
        <fullName>SMAD ubiquitination regulatory factor 2</fullName>
    </alternativeName>
    <alternativeName>
        <fullName>SMAD-specific E3 ubiquitin-protein ligase 2</fullName>
    </alternativeName>
</protein>
<evidence type="ECO:0000250" key="1">
    <source>
        <dbReference type="UniProtKB" id="Q9HAU4"/>
    </source>
</evidence>
<evidence type="ECO:0000255" key="2">
    <source>
        <dbReference type="PROSITE-ProRule" id="PRU00041"/>
    </source>
</evidence>
<evidence type="ECO:0000255" key="3">
    <source>
        <dbReference type="PROSITE-ProRule" id="PRU00104"/>
    </source>
</evidence>
<evidence type="ECO:0000255" key="4">
    <source>
        <dbReference type="PROSITE-ProRule" id="PRU00224"/>
    </source>
</evidence>
<evidence type="ECO:0000256" key="5">
    <source>
        <dbReference type="SAM" id="MobiDB-lite"/>
    </source>
</evidence>
<gene>
    <name type="primary">smurf2</name>
</gene>
<sequence length="751" mass="86325">MSNQGSRRNGPVKLRLTVLCAKNLVKKDFFRLPDSFAKVVVDGSGQCHSTDTVKNTLDPKWNQHYDLYIGKSDSITISVWNHKKIHKKQGAGFLGCVRLLSNAINRLKDTGYQRLDLCKLGPNDNDTVRGQIVVSLQSRDRIGSGGQVVDCSRLFDNDLPDGWEERRTASGRIQYLNHITRTTQWERPTRPASEYSSPGRPLSCFVDENTPITGTNGASCGQTSDPRISERRVRSQRHRNYMSRTHLHTPPDLPEGYEQRTTQQGQVYFLHTQTGVSTWHDPRVPRDLGNVNCEELGPLPPGWEIRNTATGRVYFVDHNNRTTQFTDPRLSANLHLVLNRQNQQLKEQQPPQVVSLCQLPDEVECLTVPRYKRDLVHKLKSLRQELSQQQPQAGHCRIEVSREEIFEESYRQVMKMRPKDLWKRLMIKFRGEEGLDYGGVAREWLYLLSHDMLNPYYGLFQYSRDDIYTLQINPDSAVNPEHLSYFHFVGRIMGMAVFHGHYIDGGFTLPFYKQLLGKPITLDDMESVDPDLHNSLVWILENDITGVLDHTFCVEHNAYGELIQHELKPSGKSIPVTEDTKKEYVRLYVNWRFLRGIEAQFLALQKGFNEVIPQHLLKAFDEKELELIICGLGKIDVSDWKSNTRLKHCTTDSNIVKWFWKAVESFDEERRARLLQFVTGSSRVPLQGFKALQGAAGPRLFTIHQIDASTNNLPKAHTCFNRIDIPPYETYEKLYEKLLTAIEETCGFAVE</sequence>
<name>SMUF2_XENLA</name>
<organism>
    <name type="scientific">Xenopus laevis</name>
    <name type="common">African clawed frog</name>
    <dbReference type="NCBI Taxonomy" id="8355"/>
    <lineage>
        <taxon>Eukaryota</taxon>
        <taxon>Metazoa</taxon>
        <taxon>Chordata</taxon>
        <taxon>Craniata</taxon>
        <taxon>Vertebrata</taxon>
        <taxon>Euteleostomi</taxon>
        <taxon>Amphibia</taxon>
        <taxon>Batrachia</taxon>
        <taxon>Anura</taxon>
        <taxon>Pipoidea</taxon>
        <taxon>Pipidae</taxon>
        <taxon>Xenopodinae</taxon>
        <taxon>Xenopus</taxon>
        <taxon>Xenopus</taxon>
    </lineage>
</organism>
<reference key="1">
    <citation type="submission" date="2005-12" db="EMBL/GenBank/DDBJ databases">
        <authorList>
            <consortium name="NIH - Xenopus Gene Collection (XGC) project"/>
        </authorList>
    </citation>
    <scope>NUCLEOTIDE SEQUENCE [LARGE SCALE MRNA]</scope>
    <source>
        <tissue>Embryo</tissue>
    </source>
</reference>
<comment type="function">
    <text evidence="1">E3 ubiquitin-protein ligase which accepts ubiquitin from an E2 ubiquitin-conjugating enzyme in the form of a thioester and then directly transfers the ubiquitin to targeted substrates.</text>
</comment>
<comment type="catalytic activity">
    <reaction evidence="1">
        <text>S-ubiquitinyl-[E2 ubiquitin-conjugating enzyme]-L-cysteine + [acceptor protein]-L-lysine = [E2 ubiquitin-conjugating enzyme]-L-cysteine + N(6)-ubiquitinyl-[acceptor protein]-L-lysine.</text>
        <dbReference type="EC" id="2.3.2.26"/>
    </reaction>
</comment>
<comment type="pathway">
    <text>Protein modification; protein ubiquitination.</text>
</comment>
<comment type="subcellular location">
    <subcellularLocation>
        <location evidence="1">Nucleus</location>
    </subcellularLocation>
    <subcellularLocation>
        <location evidence="1">Cytoplasm</location>
    </subcellularLocation>
    <subcellularLocation>
        <location evidence="1">Cell membrane</location>
    </subcellularLocation>
    <subcellularLocation>
        <location evidence="1">Membrane raft</location>
    </subcellularLocation>
</comment>
<proteinExistence type="evidence at transcript level"/>
<accession>Q2TAS2</accession>
<keyword id="KW-1003">Cell membrane</keyword>
<keyword id="KW-0963">Cytoplasm</keyword>
<keyword id="KW-0472">Membrane</keyword>
<keyword id="KW-0539">Nucleus</keyword>
<keyword id="KW-1185">Reference proteome</keyword>
<keyword id="KW-0677">Repeat</keyword>
<keyword id="KW-0808">Transferase</keyword>
<keyword id="KW-0833">Ubl conjugation pathway</keyword>
<feature type="chain" id="PRO_0000358320" description="E3 ubiquitin-protein ligase SMURF2">
    <location>
        <begin position="1"/>
        <end position="751"/>
    </location>
</feature>
<feature type="domain" description="C2" evidence="2">
    <location>
        <begin position="1"/>
        <end position="119"/>
    </location>
</feature>
<feature type="domain" description="WW 1" evidence="4">
    <location>
        <begin position="157"/>
        <end position="190"/>
    </location>
</feature>
<feature type="domain" description="WW 2" evidence="4">
    <location>
        <begin position="251"/>
        <end position="284"/>
    </location>
</feature>
<feature type="domain" description="WW 3" evidence="4">
    <location>
        <begin position="297"/>
        <end position="330"/>
    </location>
</feature>
<feature type="domain" description="HECT" evidence="3">
    <location>
        <begin position="417"/>
        <end position="751"/>
    </location>
</feature>
<feature type="region of interest" description="Disordered" evidence="5">
    <location>
        <begin position="214"/>
        <end position="236"/>
    </location>
</feature>
<feature type="compositionally biased region" description="Polar residues" evidence="5">
    <location>
        <begin position="214"/>
        <end position="226"/>
    </location>
</feature>
<feature type="active site" description="Glycyl thioester intermediate" evidence="3">
    <location>
        <position position="719"/>
    </location>
</feature>
<dbReference type="EC" id="2.3.2.26" evidence="1"/>
<dbReference type="EMBL" id="BC110749">
    <property type="protein sequence ID" value="AAI10750.1"/>
    <property type="molecule type" value="mRNA"/>
</dbReference>
<dbReference type="RefSeq" id="NP_001082282.1">
    <property type="nucleotide sequence ID" value="NM_001088813.1"/>
</dbReference>
<dbReference type="BMRB" id="Q2TAS2"/>
<dbReference type="SMR" id="Q2TAS2"/>
<dbReference type="DNASU" id="398372"/>
<dbReference type="GeneID" id="398372"/>
<dbReference type="KEGG" id="xla:398372"/>
<dbReference type="AGR" id="Xenbase:XB-GENE-865123"/>
<dbReference type="CTD" id="398372"/>
<dbReference type="Xenbase" id="XB-GENE-865123">
    <property type="gene designation" value="smurf2.S"/>
</dbReference>
<dbReference type="OMA" id="WEVRHTG"/>
<dbReference type="OrthoDB" id="8068875at2759"/>
<dbReference type="UniPathway" id="UPA00143"/>
<dbReference type="Proteomes" id="UP000186698">
    <property type="component" value="Chromosome 9_10S"/>
</dbReference>
<dbReference type="Bgee" id="398372">
    <property type="expression patterns" value="Expressed in blastula and 19 other cell types or tissues"/>
</dbReference>
<dbReference type="GO" id="GO:0005737">
    <property type="term" value="C:cytoplasm"/>
    <property type="evidence" value="ECO:0000318"/>
    <property type="project" value="GO_Central"/>
</dbReference>
<dbReference type="GO" id="GO:0045121">
    <property type="term" value="C:membrane raft"/>
    <property type="evidence" value="ECO:0007669"/>
    <property type="project" value="UniProtKB-SubCell"/>
</dbReference>
<dbReference type="GO" id="GO:0005634">
    <property type="term" value="C:nucleus"/>
    <property type="evidence" value="ECO:0007669"/>
    <property type="project" value="UniProtKB-SubCell"/>
</dbReference>
<dbReference type="GO" id="GO:0005886">
    <property type="term" value="C:plasma membrane"/>
    <property type="evidence" value="ECO:0007669"/>
    <property type="project" value="UniProtKB-SubCell"/>
</dbReference>
<dbReference type="GO" id="GO:0046332">
    <property type="term" value="F:SMAD binding"/>
    <property type="evidence" value="ECO:0000318"/>
    <property type="project" value="GO_Central"/>
</dbReference>
<dbReference type="GO" id="GO:0061630">
    <property type="term" value="F:ubiquitin protein ligase activity"/>
    <property type="evidence" value="ECO:0000318"/>
    <property type="project" value="GO_Central"/>
</dbReference>
<dbReference type="GO" id="GO:0030514">
    <property type="term" value="P:negative regulation of BMP signaling pathway"/>
    <property type="evidence" value="ECO:0000318"/>
    <property type="project" value="GO_Central"/>
</dbReference>
<dbReference type="GO" id="GO:0043161">
    <property type="term" value="P:proteasome-mediated ubiquitin-dependent protein catabolic process"/>
    <property type="evidence" value="ECO:0000318"/>
    <property type="project" value="GO_Central"/>
</dbReference>
<dbReference type="GO" id="GO:0016567">
    <property type="term" value="P:protein ubiquitination"/>
    <property type="evidence" value="ECO:0007669"/>
    <property type="project" value="UniProtKB-UniPathway"/>
</dbReference>
<dbReference type="CDD" id="cd08382">
    <property type="entry name" value="C2_Smurf-like"/>
    <property type="match status" value="1"/>
</dbReference>
<dbReference type="CDD" id="cd00078">
    <property type="entry name" value="HECTc"/>
    <property type="match status" value="1"/>
</dbReference>
<dbReference type="CDD" id="cd00201">
    <property type="entry name" value="WW"/>
    <property type="match status" value="3"/>
</dbReference>
<dbReference type="FunFam" id="2.20.70.10:FF:000017">
    <property type="entry name" value="E3 ubiquitin-protein ligase"/>
    <property type="match status" value="1"/>
</dbReference>
<dbReference type="FunFam" id="2.20.70.10:FF:000026">
    <property type="entry name" value="E3 ubiquitin-protein ligase"/>
    <property type="match status" value="1"/>
</dbReference>
<dbReference type="FunFam" id="2.20.70.10:FF:000047">
    <property type="entry name" value="E3 ubiquitin-protein ligase"/>
    <property type="match status" value="1"/>
</dbReference>
<dbReference type="FunFam" id="2.60.40.150:FF:000024">
    <property type="entry name" value="E3 ubiquitin-protein ligase"/>
    <property type="match status" value="1"/>
</dbReference>
<dbReference type="FunFam" id="3.30.2160.10:FF:000001">
    <property type="entry name" value="E3 ubiquitin-protein ligase NEDD4-like"/>
    <property type="match status" value="1"/>
</dbReference>
<dbReference type="FunFam" id="3.30.2410.10:FF:000014">
    <property type="entry name" value="E3 ubiquitin-protein ligase SMURF1"/>
    <property type="match status" value="1"/>
</dbReference>
<dbReference type="FunFam" id="3.90.1750.10:FF:000007">
    <property type="entry name" value="E3 ubiquitin-protein ligase SMURF2"/>
    <property type="match status" value="1"/>
</dbReference>
<dbReference type="Gene3D" id="2.20.70.10">
    <property type="match status" value="2"/>
</dbReference>
<dbReference type="Gene3D" id="2.60.40.150">
    <property type="entry name" value="C2 domain"/>
    <property type="match status" value="1"/>
</dbReference>
<dbReference type="Gene3D" id="3.30.2160.10">
    <property type="entry name" value="Hect, E3 ligase catalytic domain"/>
    <property type="match status" value="1"/>
</dbReference>
<dbReference type="Gene3D" id="3.30.2410.10">
    <property type="entry name" value="Hect, E3 ligase catalytic domain"/>
    <property type="match status" value="1"/>
</dbReference>
<dbReference type="Gene3D" id="3.90.1750.10">
    <property type="entry name" value="Hect, E3 ligase catalytic domains"/>
    <property type="match status" value="1"/>
</dbReference>
<dbReference type="InterPro" id="IPR000008">
    <property type="entry name" value="C2_dom"/>
</dbReference>
<dbReference type="InterPro" id="IPR035892">
    <property type="entry name" value="C2_domain_sf"/>
</dbReference>
<dbReference type="InterPro" id="IPR024928">
    <property type="entry name" value="E3_ub_ligase_SMURF1"/>
</dbReference>
<dbReference type="InterPro" id="IPR050409">
    <property type="entry name" value="E3_ubiq-protein_ligase"/>
</dbReference>
<dbReference type="InterPro" id="IPR000569">
    <property type="entry name" value="HECT_dom"/>
</dbReference>
<dbReference type="InterPro" id="IPR035983">
    <property type="entry name" value="Hect_E3_ubiquitin_ligase"/>
</dbReference>
<dbReference type="InterPro" id="IPR001202">
    <property type="entry name" value="WW_dom"/>
</dbReference>
<dbReference type="InterPro" id="IPR036020">
    <property type="entry name" value="WW_dom_sf"/>
</dbReference>
<dbReference type="PANTHER" id="PTHR11254:SF300">
    <property type="entry name" value="E3 UBIQUITIN-PROTEIN LIGASE SMURF2"/>
    <property type="match status" value="1"/>
</dbReference>
<dbReference type="PANTHER" id="PTHR11254">
    <property type="entry name" value="HECT DOMAIN UBIQUITIN-PROTEIN LIGASE"/>
    <property type="match status" value="1"/>
</dbReference>
<dbReference type="Pfam" id="PF00168">
    <property type="entry name" value="C2"/>
    <property type="match status" value="1"/>
</dbReference>
<dbReference type="Pfam" id="PF00632">
    <property type="entry name" value="HECT"/>
    <property type="match status" value="1"/>
</dbReference>
<dbReference type="Pfam" id="PF00397">
    <property type="entry name" value="WW"/>
    <property type="match status" value="3"/>
</dbReference>
<dbReference type="PIRSF" id="PIRSF001569">
    <property type="entry name" value="E3_ub_ligase_SMURF1"/>
    <property type="match status" value="1"/>
</dbReference>
<dbReference type="SMART" id="SM00239">
    <property type="entry name" value="C2"/>
    <property type="match status" value="1"/>
</dbReference>
<dbReference type="SMART" id="SM00119">
    <property type="entry name" value="HECTc"/>
    <property type="match status" value="1"/>
</dbReference>
<dbReference type="SMART" id="SM00456">
    <property type="entry name" value="WW"/>
    <property type="match status" value="3"/>
</dbReference>
<dbReference type="SUPFAM" id="SSF49562">
    <property type="entry name" value="C2 domain (Calcium/lipid-binding domain, CaLB)"/>
    <property type="match status" value="1"/>
</dbReference>
<dbReference type="SUPFAM" id="SSF56204">
    <property type="entry name" value="Hect, E3 ligase catalytic domain"/>
    <property type="match status" value="1"/>
</dbReference>
<dbReference type="SUPFAM" id="SSF51045">
    <property type="entry name" value="WW domain"/>
    <property type="match status" value="3"/>
</dbReference>
<dbReference type="PROSITE" id="PS50004">
    <property type="entry name" value="C2"/>
    <property type="match status" value="1"/>
</dbReference>
<dbReference type="PROSITE" id="PS50237">
    <property type="entry name" value="HECT"/>
    <property type="match status" value="1"/>
</dbReference>
<dbReference type="PROSITE" id="PS01159">
    <property type="entry name" value="WW_DOMAIN_1"/>
    <property type="match status" value="1"/>
</dbReference>
<dbReference type="PROSITE" id="PS50020">
    <property type="entry name" value="WW_DOMAIN_2"/>
    <property type="match status" value="3"/>
</dbReference>